<feature type="chain" id="PRO_0000366142" description="Putative pentacyclic triterpene synthase 7">
    <location>
        <begin position="1"/>
        <end position="761"/>
    </location>
</feature>
<feature type="repeat" description="PFTB 1">
    <location>
        <begin position="149"/>
        <end position="190"/>
    </location>
</feature>
<feature type="repeat" description="PFTB 2">
    <location>
        <begin position="593"/>
        <end position="633"/>
    </location>
</feature>
<feature type="repeat" description="PFTB 3">
    <location>
        <begin position="642"/>
        <end position="683"/>
    </location>
</feature>
<feature type="active site" description="Proton donor" evidence="1">
    <location>
        <position position="487"/>
    </location>
</feature>
<feature type="sequence conflict" description="In Ref. 1; BAB01823." evidence="2" ref="1">
    <original>M</original>
    <variation>K</variation>
    <location>
        <position position="1"/>
    </location>
</feature>
<comment type="similarity">
    <text evidence="2">Belongs to the terpene cyclase/mutase family.</text>
</comment>
<comment type="caution">
    <text evidence="2">Could be the product of a pseudogene.</text>
</comment>
<comment type="sequence caution" evidence="2">
    <conflict type="erroneous gene model prediction">
        <sequence resource="EMBL-CDS" id="AEE77558"/>
    </conflict>
</comment>
<comment type="sequence caution" evidence="2">
    <conflict type="erroneous gene model prediction">
        <sequence resource="EMBL-CDS" id="BAB01823"/>
    </conflict>
</comment>
<comment type="sequence caution" evidence="2">
    <conflict type="frameshift">
        <sequence resource="EMBL-CDS" id="BAB01823"/>
    </conflict>
</comment>
<name>PEN7_ARATH</name>
<keyword id="KW-0413">Isomerase</keyword>
<keyword id="KW-1185">Reference proteome</keyword>
<keyword id="KW-0677">Repeat</keyword>
<gene>
    <name type="primary">PEN7</name>
    <name type="ordered locus">At3g29255</name>
    <name type="ORF">MXO21.12</name>
</gene>
<evidence type="ECO:0000250" key="1">
    <source>
        <dbReference type="UniProtKB" id="P48449"/>
    </source>
</evidence>
<evidence type="ECO:0000305" key="2"/>
<accession>Q9LS68</accession>
<accession>F4J2Z9</accession>
<dbReference type="EC" id="5.4.99.-"/>
<dbReference type="EMBL" id="AB026657">
    <property type="protein sequence ID" value="BAB01823.1"/>
    <property type="status" value="ALT_SEQ"/>
    <property type="molecule type" value="Genomic_DNA"/>
</dbReference>
<dbReference type="EMBL" id="CP002686">
    <property type="protein sequence ID" value="AEE77558.1"/>
    <property type="status" value="ALT_SEQ"/>
    <property type="molecule type" value="Genomic_DNA"/>
</dbReference>
<dbReference type="RefSeq" id="NP_001154653.1">
    <property type="nucleotide sequence ID" value="NM_001161181.1"/>
</dbReference>
<dbReference type="SMR" id="Q9LS68"/>
<dbReference type="FunCoup" id="Q9LS68">
    <property type="interactions" value="694"/>
</dbReference>
<dbReference type="STRING" id="3702.Q9LS68"/>
<dbReference type="PaxDb" id="3702-AT3G29255.1"/>
<dbReference type="PeptideAtlas" id="Q9LS68"/>
<dbReference type="GeneID" id="3768995"/>
<dbReference type="KEGG" id="ath:AT3G29255"/>
<dbReference type="Araport" id="AT3G29255"/>
<dbReference type="TAIR" id="AT3G29255"/>
<dbReference type="eggNOG" id="KOG0497">
    <property type="taxonomic scope" value="Eukaryota"/>
</dbReference>
<dbReference type="InParanoid" id="Q9LS68"/>
<dbReference type="BioCyc" id="ARA:AT3G29255-MONOMER"/>
<dbReference type="Proteomes" id="UP000006548">
    <property type="component" value="Chromosome 3"/>
</dbReference>
<dbReference type="GO" id="GO:0005811">
    <property type="term" value="C:lipid droplet"/>
    <property type="evidence" value="ECO:0007669"/>
    <property type="project" value="InterPro"/>
</dbReference>
<dbReference type="GO" id="GO:0042300">
    <property type="term" value="F:beta-amyrin synthase activity"/>
    <property type="evidence" value="ECO:0000318"/>
    <property type="project" value="GO_Central"/>
</dbReference>
<dbReference type="GO" id="GO:0016104">
    <property type="term" value="P:triterpenoid biosynthetic process"/>
    <property type="evidence" value="ECO:0000318"/>
    <property type="project" value="GO_Central"/>
</dbReference>
<dbReference type="CDD" id="cd02892">
    <property type="entry name" value="SQCY_1"/>
    <property type="match status" value="1"/>
</dbReference>
<dbReference type="FunFam" id="1.50.10.20:FF:000011">
    <property type="entry name" value="Terpene cyclase/mutase family member"/>
    <property type="match status" value="1"/>
</dbReference>
<dbReference type="Gene3D" id="1.50.10.20">
    <property type="match status" value="2"/>
</dbReference>
<dbReference type="InterPro" id="IPR032696">
    <property type="entry name" value="SQ_cyclase_C"/>
</dbReference>
<dbReference type="InterPro" id="IPR032697">
    <property type="entry name" value="SQ_cyclase_N"/>
</dbReference>
<dbReference type="InterPro" id="IPR018333">
    <property type="entry name" value="Squalene_cyclase"/>
</dbReference>
<dbReference type="InterPro" id="IPR002365">
    <property type="entry name" value="Terpene_synthase_CS"/>
</dbReference>
<dbReference type="InterPro" id="IPR008930">
    <property type="entry name" value="Terpenoid_cyclase/PrenylTrfase"/>
</dbReference>
<dbReference type="NCBIfam" id="TIGR01787">
    <property type="entry name" value="squalene_cyclas"/>
    <property type="match status" value="1"/>
</dbReference>
<dbReference type="PANTHER" id="PTHR11764">
    <property type="entry name" value="TERPENE CYCLASE/MUTASE FAMILY MEMBER"/>
    <property type="match status" value="1"/>
</dbReference>
<dbReference type="PANTHER" id="PTHR11764:SF57">
    <property type="entry name" value="TIRUCALLADIENOL SYNTHASE-RELATED"/>
    <property type="match status" value="1"/>
</dbReference>
<dbReference type="Pfam" id="PF13243">
    <property type="entry name" value="SQHop_cyclase_C"/>
    <property type="match status" value="1"/>
</dbReference>
<dbReference type="Pfam" id="PF13249">
    <property type="entry name" value="SQHop_cyclase_N"/>
    <property type="match status" value="1"/>
</dbReference>
<dbReference type="SFLD" id="SFLDG01016">
    <property type="entry name" value="Prenyltransferase_Like_2"/>
    <property type="match status" value="1"/>
</dbReference>
<dbReference type="SUPFAM" id="SSF48239">
    <property type="entry name" value="Terpenoid cyclases/Protein prenyltransferases"/>
    <property type="match status" value="2"/>
</dbReference>
<dbReference type="PROSITE" id="PS01074">
    <property type="entry name" value="TERPENE_SYNTHASES"/>
    <property type="match status" value="1"/>
</dbReference>
<reference key="1">
    <citation type="journal article" date="2000" name="DNA Res.">
        <title>Structural analysis of Arabidopsis thaliana chromosome 3. I. Sequence features of the regions of 4,504,864 bp covered by sixty P1 and TAC clones.</title>
        <authorList>
            <person name="Sato S."/>
            <person name="Nakamura Y."/>
            <person name="Kaneko T."/>
            <person name="Katoh T."/>
            <person name="Asamizu E."/>
            <person name="Tabata S."/>
        </authorList>
    </citation>
    <scope>NUCLEOTIDE SEQUENCE [LARGE SCALE GENOMIC DNA]</scope>
    <source>
        <strain>cv. Columbia</strain>
    </source>
</reference>
<reference key="2">
    <citation type="journal article" date="2017" name="Plant J.">
        <title>Araport11: a complete reannotation of the Arabidopsis thaliana reference genome.</title>
        <authorList>
            <person name="Cheng C.Y."/>
            <person name="Krishnakumar V."/>
            <person name="Chan A.P."/>
            <person name="Thibaud-Nissen F."/>
            <person name="Schobel S."/>
            <person name="Town C.D."/>
        </authorList>
    </citation>
    <scope>GENOME REANNOTATION</scope>
    <source>
        <strain>cv. Columbia</strain>
    </source>
</reference>
<reference key="3">
    <citation type="journal article" date="2001" name="Plant Mol. Biol.">
        <title>Molecular cloning and expression in yeast of 2,3-oxidosqualene-triterpenoid cyclases from Arabidopsis thaliana.</title>
        <authorList>
            <person name="Husselstein-Muller T."/>
            <person name="Schaller H."/>
            <person name="Benveniste P."/>
        </authorList>
    </citation>
    <scope>IDENTIFICATION</scope>
    <scope>NOMENCLATURE</scope>
</reference>
<protein>
    <recommendedName>
        <fullName>Putative pentacyclic triterpene synthase 7</fullName>
        <shortName>AtPEN7</shortName>
        <ecNumber>5.4.99.-</ecNumber>
    </recommendedName>
</protein>
<sequence>MWKLRIGAKAGDDPHLCTTNNYLGRQIWEFDTNACSPEELFEVEKARRNFSDNRSQYKASADLLWRMQFLREKKFKQNIPRVKIEDAEKITYEEANMTLRRGIHYMAALQSDDGHWPAENSGCMFFNAPFVICLYITGHLDTIFSQEHRKEMLRYIPIIKNDDGGWGLDVESHSSMFCTVLNYICLRIMEVDPDHDRKKSACARARKWIIDRGGATYTPLFGKACLSVLGVYEWSGCKPIPPEFWLFPSYFPINGGTVWIYFRDTFMALSYLYGKKFVATPTPLILQLRQELYPQTYADIVWSQARNRCAKEDLYYPQTFVQDLFWKSVHMFSENILNRWPFKKLIRERAIRRALELIHYHDEATQYITGGGVPKVFHMLACWAEGPESGYFKKHLARVSGFIWISEDGLKIQSFGSQIWDTVLLLKVMLAADIDDEIRSMLIKGYSFLRKSQLIENPPGYYIKMFRDISKGGWGFSDKDQGWPASDCTSESLECCLIFESMPSNFIDEKMDVERLYDAVNMLLYLQSENGGKAVWERASGKKWLEWLSPIEFMEETILEHEYVECTGSAVVVLTRFMKQFPRHRTKEIETFIAKAVKYIESLQMADGSWYGNWGVCFIYATFFAVRGLVAAGKTYQSYEPIRRAVQFLLKIQNDEGGWGESFLSCPGKKYISLEGNKTNVVNTGQAMMVLIMSGQMERDPLPVHRAAKVLINSQMENGDFPQQELRGVYKMNVLLHYPTYRNIFSLWALTYYTKALRLLL</sequence>
<organism>
    <name type="scientific">Arabidopsis thaliana</name>
    <name type="common">Mouse-ear cress</name>
    <dbReference type="NCBI Taxonomy" id="3702"/>
    <lineage>
        <taxon>Eukaryota</taxon>
        <taxon>Viridiplantae</taxon>
        <taxon>Streptophyta</taxon>
        <taxon>Embryophyta</taxon>
        <taxon>Tracheophyta</taxon>
        <taxon>Spermatophyta</taxon>
        <taxon>Magnoliopsida</taxon>
        <taxon>eudicotyledons</taxon>
        <taxon>Gunneridae</taxon>
        <taxon>Pentapetalae</taxon>
        <taxon>rosids</taxon>
        <taxon>malvids</taxon>
        <taxon>Brassicales</taxon>
        <taxon>Brassicaceae</taxon>
        <taxon>Camelineae</taxon>
        <taxon>Arabidopsis</taxon>
    </lineage>
</organism>
<proteinExistence type="uncertain"/>